<dbReference type="EMBL" id="X59051">
    <property type="protein sequence ID" value="CAA41778.1"/>
    <property type="molecule type" value="mRNA"/>
</dbReference>
<dbReference type="EMBL" id="BC058150">
    <property type="protein sequence ID" value="AAH58150.1"/>
    <property type="molecule type" value="mRNA"/>
</dbReference>
<dbReference type="PIR" id="S30298">
    <property type="entry name" value="S30298"/>
</dbReference>
<dbReference type="RefSeq" id="NP_037008.1">
    <property type="nucleotide sequence ID" value="NM_012876.2"/>
</dbReference>
<dbReference type="RefSeq" id="XP_017447740.1">
    <property type="nucleotide sequence ID" value="XM_017592251.1"/>
</dbReference>
<dbReference type="RefSeq" id="XP_017450716.1">
    <property type="nucleotide sequence ID" value="XM_017595227.1"/>
</dbReference>
<dbReference type="RefSeq" id="XP_017454537.1">
    <property type="nucleotide sequence ID" value="XM_017599048.1"/>
</dbReference>
<dbReference type="RefSeq" id="XP_017458134.1">
    <property type="nucleotide sequence ID" value="XM_017602645.1"/>
</dbReference>
<dbReference type="RefSeq" id="XP_017458926.1">
    <property type="nucleotide sequence ID" value="XM_017603437.1"/>
</dbReference>
<dbReference type="RefSeq" id="XP_017460190.1">
    <property type="nucleotide sequence ID" value="XM_017604701.1"/>
</dbReference>
<dbReference type="SMR" id="P62275"/>
<dbReference type="BioGRID" id="247387">
    <property type="interactions" value="2"/>
</dbReference>
<dbReference type="FunCoup" id="P62275">
    <property type="interactions" value="2481"/>
</dbReference>
<dbReference type="STRING" id="10116.ENSRNOP00000005577"/>
<dbReference type="iPTMnet" id="P62275"/>
<dbReference type="PhosphoSitePlus" id="P62275"/>
<dbReference type="jPOST" id="P62275"/>
<dbReference type="PaxDb" id="10116-ENSRNOP00000005577"/>
<dbReference type="Ensembl" id="ENSRNOT00000005577.8">
    <property type="protein sequence ID" value="ENSRNOP00000005577.5"/>
    <property type="gene ID" value="ENSRNOG00000004196.8"/>
</dbReference>
<dbReference type="Ensembl" id="ENSRNOT00000041384.5">
    <property type="protein sequence ID" value="ENSRNOP00000044909.2"/>
    <property type="gene ID" value="ENSRNOG00000028939.5"/>
</dbReference>
<dbReference type="GeneID" id="25348"/>
<dbReference type="KEGG" id="rno:25348"/>
<dbReference type="UCSC" id="RGD:3596">
    <property type="organism name" value="rat"/>
</dbReference>
<dbReference type="AGR" id="RGD:3596"/>
<dbReference type="CTD" id="6235"/>
<dbReference type="RGD" id="3596">
    <property type="gene designation" value="Rps29"/>
</dbReference>
<dbReference type="VEuPathDB" id="HostDB:ENSRNOG00000068233"/>
<dbReference type="VEuPathDB" id="HostDB:ENSRNOG00000068524"/>
<dbReference type="eggNOG" id="KOG3506">
    <property type="taxonomic scope" value="Eukaryota"/>
</dbReference>
<dbReference type="GeneTree" id="ENSGT00940000154720"/>
<dbReference type="GeneTree" id="ENSGT00940000161931"/>
<dbReference type="HOGENOM" id="CLU_177289_1_1_1"/>
<dbReference type="InParanoid" id="P62275"/>
<dbReference type="OMA" id="HCFREIA"/>
<dbReference type="OrthoDB" id="10252683at2759"/>
<dbReference type="PhylomeDB" id="P62275"/>
<dbReference type="TreeFam" id="TF300217"/>
<dbReference type="Reactome" id="R-RNO-156827">
    <property type="pathway name" value="L13a-mediated translational silencing of Ceruloplasmin expression"/>
</dbReference>
<dbReference type="Reactome" id="R-RNO-1799339">
    <property type="pathway name" value="SRP-dependent cotranslational protein targeting to membrane"/>
</dbReference>
<dbReference type="Reactome" id="R-RNO-6791226">
    <property type="pathway name" value="Major pathway of rRNA processing in the nucleolus and cytosol"/>
</dbReference>
<dbReference type="Reactome" id="R-RNO-72649">
    <property type="pathway name" value="Translation initiation complex formation"/>
</dbReference>
<dbReference type="Reactome" id="R-RNO-72689">
    <property type="pathway name" value="Formation of a pool of free 40S subunits"/>
</dbReference>
<dbReference type="Reactome" id="R-RNO-72695">
    <property type="pathway name" value="Formation of the ternary complex, and subsequently, the 43S complex"/>
</dbReference>
<dbReference type="Reactome" id="R-RNO-72702">
    <property type="pathway name" value="Ribosomal scanning and start codon recognition"/>
</dbReference>
<dbReference type="Reactome" id="R-RNO-72706">
    <property type="pathway name" value="GTP hydrolysis and joining of the 60S ribosomal subunit"/>
</dbReference>
<dbReference type="Reactome" id="R-RNO-975956">
    <property type="pathway name" value="Nonsense Mediated Decay (NMD) independent of the Exon Junction Complex (EJC)"/>
</dbReference>
<dbReference type="Reactome" id="R-RNO-975957">
    <property type="pathway name" value="Nonsense Mediated Decay (NMD) enhanced by the Exon Junction Complex (EJC)"/>
</dbReference>
<dbReference type="PRO" id="PR:P62275"/>
<dbReference type="Proteomes" id="UP000002494">
    <property type="component" value="Chromosome 13"/>
</dbReference>
<dbReference type="Proteomes" id="UP000002494">
    <property type="component" value="Chromosome 6"/>
</dbReference>
<dbReference type="Bgee" id="ENSRNOG00000004196">
    <property type="expression patterns" value="Expressed in thymus and 19 other cell types or tissues"/>
</dbReference>
<dbReference type="GO" id="GO:0098556">
    <property type="term" value="C:cytoplasmic side of rough endoplasmic reticulum membrane"/>
    <property type="evidence" value="ECO:0000266"/>
    <property type="project" value="RGD"/>
</dbReference>
<dbReference type="GO" id="GO:0022627">
    <property type="term" value="C:cytosolic small ribosomal subunit"/>
    <property type="evidence" value="ECO:0000314"/>
    <property type="project" value="RGD"/>
</dbReference>
<dbReference type="GO" id="GO:0005840">
    <property type="term" value="C:ribosome"/>
    <property type="evidence" value="ECO:0000250"/>
    <property type="project" value="UniProtKB"/>
</dbReference>
<dbReference type="GO" id="GO:0003735">
    <property type="term" value="F:structural constituent of ribosome"/>
    <property type="evidence" value="ECO:0000266"/>
    <property type="project" value="RGD"/>
</dbReference>
<dbReference type="GO" id="GO:0008270">
    <property type="term" value="F:zinc ion binding"/>
    <property type="evidence" value="ECO:0000250"/>
    <property type="project" value="UniProtKB"/>
</dbReference>
<dbReference type="GO" id="GO:0002181">
    <property type="term" value="P:cytoplasmic translation"/>
    <property type="evidence" value="ECO:0000250"/>
    <property type="project" value="UniProtKB"/>
</dbReference>
<dbReference type="GO" id="GO:0043065">
    <property type="term" value="P:positive regulation of apoptotic process"/>
    <property type="evidence" value="ECO:0000314"/>
    <property type="project" value="RGD"/>
</dbReference>
<dbReference type="FunFam" id="4.10.830.10:FF:000002">
    <property type="entry name" value="40S ribosomal protein S29"/>
    <property type="match status" value="1"/>
</dbReference>
<dbReference type="Gene3D" id="4.10.830.10">
    <property type="entry name" value="30s Ribosomal Protein S14, Chain N"/>
    <property type="match status" value="1"/>
</dbReference>
<dbReference type="InterPro" id="IPR001209">
    <property type="entry name" value="Ribosomal_uS14"/>
</dbReference>
<dbReference type="InterPro" id="IPR018271">
    <property type="entry name" value="Ribosomal_uS14_CS"/>
</dbReference>
<dbReference type="InterPro" id="IPR039744">
    <property type="entry name" value="RIbosomal_uS14_euk_arc"/>
</dbReference>
<dbReference type="InterPro" id="IPR043140">
    <property type="entry name" value="Ribosomal_uS14_sf"/>
</dbReference>
<dbReference type="NCBIfam" id="NF004424">
    <property type="entry name" value="PRK05766.1"/>
    <property type="match status" value="1"/>
</dbReference>
<dbReference type="PANTHER" id="PTHR12010">
    <property type="entry name" value="40S RIBOSOMAL PROTEIN S29"/>
    <property type="match status" value="1"/>
</dbReference>
<dbReference type="PANTHER" id="PTHR12010:SF26">
    <property type="entry name" value="SMALL RIBOSOMAL SUBUNIT PROTEIN US14"/>
    <property type="match status" value="1"/>
</dbReference>
<dbReference type="Pfam" id="PF00253">
    <property type="entry name" value="Ribosomal_S14"/>
    <property type="match status" value="1"/>
</dbReference>
<dbReference type="PROSITE" id="PS00527">
    <property type="entry name" value="RIBOSOMAL_S14"/>
    <property type="match status" value="1"/>
</dbReference>
<sequence>MGHQQLYWSHPRKFGQGSRSCRVCSNRHGLIRKYGLNMCRQCFRQYAKDIGFIKLD</sequence>
<feature type="initiator methionine" description="Removed" evidence="3">
    <location>
        <position position="1"/>
    </location>
</feature>
<feature type="chain" id="PRO_0000131022" description="Small ribosomal subunit protein uS14">
    <location>
        <begin position="2"/>
        <end position="56"/>
    </location>
</feature>
<feature type="binding site" evidence="1">
    <location>
        <position position="21"/>
    </location>
    <ligand>
        <name>Zn(2+)</name>
        <dbReference type="ChEBI" id="CHEBI:29105"/>
    </ligand>
</feature>
<feature type="binding site" evidence="1">
    <location>
        <position position="24"/>
    </location>
    <ligand>
        <name>Zn(2+)</name>
        <dbReference type="ChEBI" id="CHEBI:29105"/>
    </ligand>
</feature>
<feature type="binding site" evidence="1">
    <location>
        <position position="39"/>
    </location>
    <ligand>
        <name>Zn(2+)</name>
        <dbReference type="ChEBI" id="CHEBI:29105"/>
    </ligand>
</feature>
<feature type="binding site" evidence="1">
    <location>
        <position position="42"/>
    </location>
    <ligand>
        <name>Zn(2+)</name>
        <dbReference type="ChEBI" id="CHEBI:29105"/>
    </ligand>
</feature>
<feature type="modified residue" description="Phosphoserine" evidence="1">
    <location>
        <position position="9"/>
    </location>
</feature>
<feature type="modified residue" description="Omega-N-methylarginine" evidence="1">
    <location>
        <position position="12"/>
    </location>
</feature>
<feature type="modified residue" description="N6-acetyllysine" evidence="1">
    <location>
        <position position="48"/>
    </location>
</feature>
<accession>P62275</accession>
<accession>P30054</accession>
<evidence type="ECO:0000250" key="1">
    <source>
        <dbReference type="UniProtKB" id="P62273"/>
    </source>
</evidence>
<evidence type="ECO:0000250" key="2">
    <source>
        <dbReference type="UniProtKB" id="Q6QAP6"/>
    </source>
</evidence>
<evidence type="ECO:0000269" key="3">
    <source>
    </source>
</evidence>
<evidence type="ECO:0000305" key="4"/>
<name>RS29_RAT</name>
<gene>
    <name type="primary">Rps29</name>
</gene>
<organism>
    <name type="scientific">Rattus norvegicus</name>
    <name type="common">Rat</name>
    <dbReference type="NCBI Taxonomy" id="10116"/>
    <lineage>
        <taxon>Eukaryota</taxon>
        <taxon>Metazoa</taxon>
        <taxon>Chordata</taxon>
        <taxon>Craniata</taxon>
        <taxon>Vertebrata</taxon>
        <taxon>Euteleostomi</taxon>
        <taxon>Mammalia</taxon>
        <taxon>Eutheria</taxon>
        <taxon>Euarchontoglires</taxon>
        <taxon>Glires</taxon>
        <taxon>Rodentia</taxon>
        <taxon>Myomorpha</taxon>
        <taxon>Muroidea</taxon>
        <taxon>Muridae</taxon>
        <taxon>Murinae</taxon>
        <taxon>Rattus</taxon>
    </lineage>
</organism>
<protein>
    <recommendedName>
        <fullName evidence="4">Small ribosomal subunit protein uS14</fullName>
    </recommendedName>
    <alternativeName>
        <fullName>40S ribosomal protein S29</fullName>
    </alternativeName>
</protein>
<proteinExistence type="evidence at protein level"/>
<keyword id="KW-0007">Acetylation</keyword>
<keyword id="KW-0963">Cytoplasm</keyword>
<keyword id="KW-0903">Direct protein sequencing</keyword>
<keyword id="KW-0256">Endoplasmic reticulum</keyword>
<keyword id="KW-0479">Metal-binding</keyword>
<keyword id="KW-0488">Methylation</keyword>
<keyword id="KW-0597">Phosphoprotein</keyword>
<keyword id="KW-1185">Reference proteome</keyword>
<keyword id="KW-0687">Ribonucleoprotein</keyword>
<keyword id="KW-0689">Ribosomal protein</keyword>
<keyword id="KW-0862">Zinc</keyword>
<reference key="1">
    <citation type="journal article" date="1993" name="Nucleic Acids Res.">
        <title>Zinc finger-like motifs in rat ribosomal proteins S27 and S29.</title>
        <authorList>
            <person name="Chan Y.-L."/>
            <person name="Suzuki K."/>
            <person name="Olvera J."/>
            <person name="Wool I.G."/>
        </authorList>
    </citation>
    <scope>NUCLEOTIDE SEQUENCE [MRNA]</scope>
    <scope>PROTEIN SEQUENCE OF 2-56</scope>
    <source>
        <strain>Sprague-Dawley</strain>
        <tissue>Liver</tissue>
    </source>
</reference>
<reference key="2">
    <citation type="journal article" date="2004" name="Genome Res.">
        <title>The status, quality, and expansion of the NIH full-length cDNA project: the Mammalian Gene Collection (MGC).</title>
        <authorList>
            <consortium name="The MGC Project Team"/>
        </authorList>
    </citation>
    <scope>NUCLEOTIDE SEQUENCE [LARGE SCALE MRNA]</scope>
    <source>
        <tissue>Pituitary</tissue>
    </source>
</reference>
<comment type="function">
    <text evidence="1">Component of the small ribosomal subunit. The ribosome is a large ribonucleoprotein complex responsible for the synthesis of proteins in the cell.</text>
</comment>
<comment type="cofactor">
    <cofactor evidence="1">
        <name>Zn(2+)</name>
        <dbReference type="ChEBI" id="CHEBI:29105"/>
    </cofactor>
    <text evidence="1">Binds 1 zinc ion per subunit.</text>
</comment>
<comment type="subunit">
    <text evidence="2">Component of the 40S small ribosomal subunit.</text>
</comment>
<comment type="subcellular location">
    <subcellularLocation>
        <location evidence="1">Cytoplasm</location>
        <location evidence="1">Cytosol</location>
    </subcellularLocation>
    <subcellularLocation>
        <location evidence="1">Cytoplasm</location>
    </subcellularLocation>
    <subcellularLocation>
        <location evidence="2">Rough endoplasmic reticulum</location>
    </subcellularLocation>
    <text evidence="1 2">Detected on cytosolic polysomes (By similarity). Detected in ribosomes that are associated with the rough endoplasmic reticulum (By similarity).</text>
</comment>
<comment type="similarity">
    <text evidence="4">Belongs to the universal ribosomal protein uS14 family.</text>
</comment>